<reference key="1">
    <citation type="journal article" date="2000" name="DNA Res.">
        <title>Structural analysis of Arabidopsis thaliana chromosome 5. X. Sequence features of the regions of 3,076,755 bp covered by sixty P1 and TAC clones.</title>
        <authorList>
            <person name="Sato S."/>
            <person name="Nakamura Y."/>
            <person name="Kaneko T."/>
            <person name="Katoh T."/>
            <person name="Asamizu E."/>
            <person name="Kotani H."/>
            <person name="Tabata S."/>
        </authorList>
    </citation>
    <scope>NUCLEOTIDE SEQUENCE [LARGE SCALE GENOMIC DNA]</scope>
    <source>
        <strain>cv. Columbia</strain>
    </source>
</reference>
<reference key="2">
    <citation type="journal article" date="2017" name="Plant J.">
        <title>Araport11: a complete reannotation of the Arabidopsis thaliana reference genome.</title>
        <authorList>
            <person name="Cheng C.Y."/>
            <person name="Krishnakumar V."/>
            <person name="Chan A.P."/>
            <person name="Thibaud-Nissen F."/>
            <person name="Schobel S."/>
            <person name="Town C.D."/>
        </authorList>
    </citation>
    <scope>GENOME REANNOTATION</scope>
    <source>
        <strain>cv. Columbia</strain>
    </source>
</reference>
<reference key="3">
    <citation type="journal article" date="2012" name="Dev. Cell">
        <title>Mitochondrial GCD1 dysfunction reveals reciprocal cell-to-cell signaling during the maturation of Arabidopsis female gametes.</title>
        <authorList>
            <person name="Wu J.-J."/>
            <person name="Peng X.-B."/>
            <person name="Li W.-W."/>
            <person name="He R."/>
            <person name="Xin H.-P."/>
            <person name="Sun M.-X."/>
        </authorList>
    </citation>
    <scope>FUNCTION</scope>
    <scope>DISRUPTION PHENOTYPE</scope>
    <scope>SUBCELLULAR LOCATION</scope>
    <scope>TISSUE SPECIFICITY</scope>
    <scope>DEVELOPMENTAL STAGE</scope>
</reference>
<reference key="4">
    <citation type="journal article" date="2023" name="Plant Cell">
        <title>An updated nomenclature for plant ribosomal protein genes.</title>
        <authorList>
            <person name="Scarpin M.R."/>
            <person name="Busche M."/>
            <person name="Martinez R.E."/>
            <person name="Harper L.C."/>
            <person name="Reiser L."/>
            <person name="Szakonyi D."/>
            <person name="Merchante C."/>
            <person name="Lan T."/>
            <person name="Xiong W."/>
            <person name="Mo B."/>
            <person name="Tang G."/>
            <person name="Chen X."/>
            <person name="Bailey-Serres J."/>
            <person name="Browning K.S."/>
            <person name="Brunkard J.O."/>
        </authorList>
    </citation>
    <scope>NOMENCLATURE</scope>
</reference>
<accession>Q9LVA9</accession>
<accession>F4K6F8</accession>
<protein>
    <recommendedName>
        <fullName evidence="5">Small ribosomal subunit protein mS75</fullName>
    </recommendedName>
    <alternativeName>
        <fullName evidence="4">Protein GAMETE CELL DEFECTIVE 1, mitochondrial</fullName>
        <shortName evidence="4">AtGCD1</shortName>
    </alternativeName>
</protein>
<comment type="function">
    <text evidence="3">Essential for fertility (male and female gametophyte functions and development) (PubMed:23085019). Required for the integrity of female gametic mitochondria (PubMed:23085019). Modulates male gametophyte functions, including pollen tube growth and style penetration (PubMed:23085019). Involved in mitochondrial-driven cell-to-cell communication in embryo sacs during female gametes maturation (including embryogenesis initiation and endosperm development), especially for reciprocal signaling between central and egg cells which regulates reciprocal development (PubMed:23085019).</text>
</comment>
<comment type="subunit">
    <text evidence="6">Component of the mitochondrial ribosome small subunit.</text>
</comment>
<comment type="subcellular location">
    <subcellularLocation>
        <location evidence="3 5">Mitochondrion</location>
    </subcellularLocation>
</comment>
<comment type="alternative products">
    <event type="alternative splicing"/>
    <isoform>
        <id>Q9LVA9-1</id>
        <name>1</name>
        <sequence type="displayed"/>
    </isoform>
    <isoform>
        <id>Q9LVA9-2</id>
        <name>2</name>
        <sequence type="described" ref="VSP_060591 VSP_060592"/>
    </isoform>
</comment>
<comment type="tissue specificity">
    <text evidence="3">Expressed at high levels in reproductive organs and, at lower levels, ubiquitously.</text>
</comment>
<comment type="developmental stage">
    <text evidence="3">In flowers, accumulates in the female gametophytes at different stages, as well as in early embryos and endosperms.</text>
</comment>
<comment type="disruption phenotype">
    <text evidence="3">Irregular structure and reduced number of cristae in female gametic mitochondria (PubMed:23085019). Completely disrupted male gametophyte functioning (shortened pollen tubes leading to altered style penetration) and impaired female gametes final maturation of the egg and central cells (persistent antipodal cells in embryo sacs, as well as small and short egg cells), not required for double fertilization, but essential for embryogenesis initiation and endosperm development, thus leading to the presence of aborted seeds in siliques (PubMed:23085019).</text>
</comment>
<organism>
    <name type="scientific">Arabidopsis thaliana</name>
    <name type="common">Mouse-ear cress</name>
    <dbReference type="NCBI Taxonomy" id="3702"/>
    <lineage>
        <taxon>Eukaryota</taxon>
        <taxon>Viridiplantae</taxon>
        <taxon>Streptophyta</taxon>
        <taxon>Embryophyta</taxon>
        <taxon>Tracheophyta</taxon>
        <taxon>Spermatophyta</taxon>
        <taxon>Magnoliopsida</taxon>
        <taxon>eudicotyledons</taxon>
        <taxon>Gunneridae</taxon>
        <taxon>Pentapetalae</taxon>
        <taxon>rosids</taxon>
        <taxon>malvids</taxon>
        <taxon>Brassicales</taxon>
        <taxon>Brassicaceae</taxon>
        <taxon>Camelineae</taxon>
        <taxon>Arabidopsis</taxon>
    </lineage>
</organism>
<proteinExistence type="evidence at protein level"/>
<feature type="transit peptide" description="Mitochondrion" evidence="1">
    <location>
        <begin position="1"/>
        <end position="11"/>
    </location>
</feature>
<feature type="chain" id="PRO_0000450244" description="Small ribosomal subunit protein mS75">
    <location>
        <begin position="12"/>
        <end position="420"/>
    </location>
</feature>
<feature type="region of interest" description="Disordered" evidence="2">
    <location>
        <begin position="99"/>
        <end position="120"/>
    </location>
</feature>
<feature type="region of interest" description="Disordered" evidence="2">
    <location>
        <begin position="390"/>
        <end position="420"/>
    </location>
</feature>
<feature type="compositionally biased region" description="Polar residues" evidence="2">
    <location>
        <begin position="102"/>
        <end position="114"/>
    </location>
</feature>
<feature type="compositionally biased region" description="Basic residues" evidence="2">
    <location>
        <begin position="396"/>
        <end position="409"/>
    </location>
</feature>
<feature type="splice variant" id="VSP_060591" description="In isoform 2.">
    <original>SI</original>
    <variation>KI</variation>
    <location>
        <begin position="382"/>
        <end position="383"/>
    </location>
</feature>
<feature type="splice variant" id="VSP_060592" description="In isoform 2.">
    <location>
        <begin position="384"/>
        <end position="420"/>
    </location>
</feature>
<name>GCD1_ARATH</name>
<evidence type="ECO:0000255" key="1"/>
<evidence type="ECO:0000256" key="2">
    <source>
        <dbReference type="SAM" id="MobiDB-lite"/>
    </source>
</evidence>
<evidence type="ECO:0000269" key="3">
    <source>
    </source>
</evidence>
<evidence type="ECO:0000303" key="4">
    <source>
    </source>
</evidence>
<evidence type="ECO:0000303" key="5">
    <source>
    </source>
</evidence>
<evidence type="ECO:0000305" key="6"/>
<evidence type="ECO:0000312" key="7">
    <source>
        <dbReference type="Araport" id="AT5G62270"/>
    </source>
</evidence>
<evidence type="ECO:0000312" key="8">
    <source>
        <dbReference type="EMBL" id="BAA97191.1"/>
    </source>
</evidence>
<gene>
    <name evidence="4" type="primary">GCD1</name>
    <name evidence="7" type="ordered locus">At5g62270</name>
    <name evidence="8" type="ORF">MMI9.10</name>
</gene>
<dbReference type="EMBL" id="AB019235">
    <property type="protein sequence ID" value="BAA97191.1"/>
    <property type="molecule type" value="Genomic_DNA"/>
</dbReference>
<dbReference type="EMBL" id="CP002688">
    <property type="protein sequence ID" value="AED97588.1"/>
    <property type="molecule type" value="Genomic_DNA"/>
</dbReference>
<dbReference type="EMBL" id="CP002688">
    <property type="protein sequence ID" value="AED97589.1"/>
    <property type="molecule type" value="Genomic_DNA"/>
</dbReference>
<dbReference type="RefSeq" id="NP_001190596.1">
    <molecule id="Q9LVA9-1"/>
    <property type="nucleotide sequence ID" value="NM_001203667.2"/>
</dbReference>
<dbReference type="RefSeq" id="NP_201033.2">
    <molecule id="Q9LVA9-2"/>
    <property type="nucleotide sequence ID" value="NM_125621.4"/>
</dbReference>
<dbReference type="PDB" id="6XYW">
    <property type="method" value="EM"/>
    <property type="resolution" value="3.86 A"/>
    <property type="chains" value="BD=1-420"/>
</dbReference>
<dbReference type="PDBsum" id="6XYW"/>
<dbReference type="EMDB" id="EMD-10654"/>
<dbReference type="SMR" id="Q9LVA9"/>
<dbReference type="FunCoup" id="Q9LVA9">
    <property type="interactions" value="1865"/>
</dbReference>
<dbReference type="IntAct" id="Q9LVA9">
    <property type="interactions" value="3"/>
</dbReference>
<dbReference type="STRING" id="3702.Q9LVA9"/>
<dbReference type="iPTMnet" id="Q9LVA9"/>
<dbReference type="PaxDb" id="3702-AT5G62270.2"/>
<dbReference type="ProteomicsDB" id="220120"/>
<dbReference type="EnsemblPlants" id="AT5G62270.1">
    <molecule id="Q9LVA9-2"/>
    <property type="protein sequence ID" value="AT5G62270.1"/>
    <property type="gene ID" value="AT5G62270"/>
</dbReference>
<dbReference type="EnsemblPlants" id="AT5G62270.2">
    <molecule id="Q9LVA9-1"/>
    <property type="protein sequence ID" value="AT5G62270.2"/>
    <property type="gene ID" value="AT5G62270"/>
</dbReference>
<dbReference type="GeneID" id="836348"/>
<dbReference type="Gramene" id="AT5G62270.1">
    <molecule id="Q9LVA9-2"/>
    <property type="protein sequence ID" value="AT5G62270.1"/>
    <property type="gene ID" value="AT5G62270"/>
</dbReference>
<dbReference type="Gramene" id="AT5G62270.2">
    <molecule id="Q9LVA9-1"/>
    <property type="protein sequence ID" value="AT5G62270.2"/>
    <property type="gene ID" value="AT5G62270"/>
</dbReference>
<dbReference type="KEGG" id="ath:AT5G62270"/>
<dbReference type="Araport" id="AT5G62270"/>
<dbReference type="TAIR" id="AT5G62270">
    <property type="gene designation" value="GCD1"/>
</dbReference>
<dbReference type="eggNOG" id="ENOG502QPTE">
    <property type="taxonomic scope" value="Eukaryota"/>
</dbReference>
<dbReference type="HOGENOM" id="CLU_058322_0_0_1"/>
<dbReference type="InParanoid" id="Q9LVA9"/>
<dbReference type="OMA" id="DMLYDEF"/>
<dbReference type="PhylomeDB" id="Q9LVA9"/>
<dbReference type="PRO" id="PR:Q9LVA9"/>
<dbReference type="Proteomes" id="UP000006548">
    <property type="component" value="Chromosome 5"/>
</dbReference>
<dbReference type="ExpressionAtlas" id="Q9LVA9">
    <property type="expression patterns" value="baseline and differential"/>
</dbReference>
<dbReference type="GO" id="GO:0005739">
    <property type="term" value="C:mitochondrion"/>
    <property type="evidence" value="ECO:0000314"/>
    <property type="project" value="TAIR"/>
</dbReference>
<dbReference type="GO" id="GO:1990904">
    <property type="term" value="C:ribonucleoprotein complex"/>
    <property type="evidence" value="ECO:0007669"/>
    <property type="project" value="UniProtKB-KW"/>
</dbReference>
<dbReference type="GO" id="GO:0005840">
    <property type="term" value="C:ribosome"/>
    <property type="evidence" value="ECO:0007669"/>
    <property type="project" value="UniProtKB-KW"/>
</dbReference>
<dbReference type="GO" id="GO:0007154">
    <property type="term" value="P:cell communication"/>
    <property type="evidence" value="ECO:0000315"/>
    <property type="project" value="UniProtKB"/>
</dbReference>
<dbReference type="GO" id="GO:0009793">
    <property type="term" value="P:embryo development ending in seed dormancy"/>
    <property type="evidence" value="ECO:0000315"/>
    <property type="project" value="UniProtKB"/>
</dbReference>
<dbReference type="GO" id="GO:0010342">
    <property type="term" value="P:endosperm cellularization"/>
    <property type="evidence" value="ECO:0007669"/>
    <property type="project" value="EnsemblPlants"/>
</dbReference>
<dbReference type="GO" id="GO:0009960">
    <property type="term" value="P:endosperm development"/>
    <property type="evidence" value="ECO:0007669"/>
    <property type="project" value="EnsemblPlants"/>
</dbReference>
<dbReference type="GO" id="GO:0048229">
    <property type="term" value="P:gametophyte development"/>
    <property type="evidence" value="ECO:0000315"/>
    <property type="project" value="TAIR"/>
</dbReference>
<dbReference type="GO" id="GO:0007006">
    <property type="term" value="P:mitochondrial membrane organization"/>
    <property type="evidence" value="ECO:0000315"/>
    <property type="project" value="TAIR"/>
</dbReference>
<dbReference type="GO" id="GO:0051647">
    <property type="term" value="P:nucleus localization"/>
    <property type="evidence" value="ECO:0007669"/>
    <property type="project" value="EnsemblPlants"/>
</dbReference>
<dbReference type="GO" id="GO:0009555">
    <property type="term" value="P:pollen development"/>
    <property type="evidence" value="ECO:0007669"/>
    <property type="project" value="EnsemblPlants"/>
</dbReference>
<dbReference type="GO" id="GO:0009846">
    <property type="term" value="P:pollen germination"/>
    <property type="evidence" value="ECO:0007669"/>
    <property type="project" value="EnsemblPlants"/>
</dbReference>
<dbReference type="GO" id="GO:0048868">
    <property type="term" value="P:pollen tube development"/>
    <property type="evidence" value="ECO:0000315"/>
    <property type="project" value="UniProtKB"/>
</dbReference>
<dbReference type="GO" id="GO:0010468">
    <property type="term" value="P:regulation of gene expression"/>
    <property type="evidence" value="ECO:0007669"/>
    <property type="project" value="EnsemblPlants"/>
</dbReference>
<dbReference type="GO" id="GO:0043067">
    <property type="term" value="P:regulation of programmed cell death"/>
    <property type="evidence" value="ECO:0007669"/>
    <property type="project" value="EnsemblPlants"/>
</dbReference>
<dbReference type="GO" id="GO:0010581">
    <property type="term" value="P:regulation of starch biosynthetic process"/>
    <property type="evidence" value="ECO:0007669"/>
    <property type="project" value="EnsemblPlants"/>
</dbReference>
<dbReference type="GO" id="GO:0007033">
    <property type="term" value="P:vacuole organization"/>
    <property type="evidence" value="ECO:0007669"/>
    <property type="project" value="EnsemblPlants"/>
</dbReference>
<dbReference type="InterPro" id="IPR052851">
    <property type="entry name" value="GCD1_mitochondrial"/>
</dbReference>
<dbReference type="PANTHER" id="PTHR35476">
    <property type="entry name" value="MUCIN-LIKE PROTEIN"/>
    <property type="match status" value="1"/>
</dbReference>
<dbReference type="PANTHER" id="PTHR35476:SF3">
    <property type="entry name" value="SMALL RIBOSOMAL SUBUNIT PROTEIN MS75"/>
    <property type="match status" value="1"/>
</dbReference>
<dbReference type="Pfam" id="PF12298">
    <property type="entry name" value="Bot1p"/>
    <property type="match status" value="1"/>
</dbReference>
<sequence>MYNLSRIIYRFSSVSLNPSTRASGFLLENASSKILQSATNRAFSAKSGSDGVGGDDNGWNISTGGSFGGTGSADLDWDNKSMWSTGLTKEHFDGVSVGRQKNAANPSSDNTPSDSGDVMSKLGPKEVALVNEMNEYDDLLKEIEQDNRQGRAFVDGIKQRMMEISVLLKQVKEPGARGSYLKDSEKTEMYRLHKENPEVYTIERLAKDYRIMRQRVHAILFLKEDEEEEERKLGRPLDDSVDRLLDEYPEFFISHDREFHVASLNYKPDFKVMPEGWDGTIKDMDEVHYEISKKEDDMLYEEFVRRFEFNKMKWRGEVMCHKYSRRRSSEGWKITVEKLGAKGKRGAGGGWKFMSLPDGSSRPLNEMEKVYVKRETPLRRRSIISTEVMRYSPANQKRRSKRKQKRKERRIACLKAGKQT</sequence>
<keyword id="KW-0002">3D-structure</keyword>
<keyword id="KW-0025">Alternative splicing</keyword>
<keyword id="KW-0217">Developmental protein</keyword>
<keyword id="KW-0496">Mitochondrion</keyword>
<keyword id="KW-1185">Reference proteome</keyword>
<keyword id="KW-0687">Ribonucleoprotein</keyword>
<keyword id="KW-0689">Ribosomal protein</keyword>
<keyword id="KW-0809">Transit peptide</keyword>